<feature type="chain" id="PRO_0000458944" description="Alkylcitrate dehydratase phiI">
    <location>
        <begin position="1"/>
        <end position="504"/>
    </location>
</feature>
<proteinExistence type="evidence at protein level"/>
<reference key="1">
    <citation type="journal article" date="2015" name="Org. Lett.">
        <title>Biosynthetic study on antihypercholesterolemic agent phomoidride: general biogenesis of fungal dimeric anhydrides.</title>
        <authorList>
            <person name="Fujii R."/>
            <person name="Matsu Y."/>
            <person name="Minami A."/>
            <person name="Nagamine S."/>
            <person name="Takeuchi I."/>
            <person name="Gomi K."/>
            <person name="Oikawa H."/>
        </authorList>
    </citation>
    <scope>NUCLEOTIDE SEQUENCE [GENOMIC DNA]</scope>
    <scope>INDUCTION</scope>
    <scope>FUNCTION</scope>
    <scope>CATALYTIC ACTIVITY</scope>
    <scope>PATHWAY</scope>
    <source>
        <strain>ATCC 74256</strain>
    </source>
</reference>
<reference key="2">
    <citation type="journal article" date="1997" name="J. Antibiot.">
        <title>CP-225,917 and CP-263,114, novel Ras farnesylation inhibitors from an unidentified fungus. I. Taxonomy, fermentation, isolation, and biochemical properties.</title>
        <authorList>
            <person name="Dabrah T.T."/>
            <person name="Harwood H.J. Jr."/>
            <person name="Huang L.H."/>
            <person name="Jankovich N.D."/>
            <person name="Kaneko T."/>
            <person name="Li J.C."/>
            <person name="Lindsey S."/>
            <person name="Moshier P.M."/>
            <person name="Subashi T.A."/>
            <person name="Therrien M."/>
            <person name="Watts P.C."/>
        </authorList>
    </citation>
    <scope>BIOTECHNOLOGY</scope>
</reference>
<reference key="3">
    <citation type="journal article" date="2022" name="J. Am. Chem. Soc.">
        <title>Elucidation of late-stage biosynthesis of phomoidride: proposal of cyclization mechanism affording characteristic nine-membered ring of fungal dimeric anhydride.</title>
        <authorList>
            <person name="Yamamoto S."/>
            <person name="Matsuyama T."/>
            <person name="Ozaki T."/>
            <person name="Takino J."/>
            <person name="Sato H."/>
            <person name="Uchiyama M."/>
            <person name="Minami A."/>
            <person name="Oikawa H."/>
        </authorList>
    </citation>
    <scope>FUNCTION</scope>
</reference>
<gene>
    <name evidence="4" type="primary">phiI</name>
</gene>
<protein>
    <recommendedName>
        <fullName evidence="4">Alkylcitrate dehydratase phiI</fullName>
        <shortName evidence="4">ACDH</shortName>
        <ecNumber evidence="2">4.2.1.-</ecNumber>
    </recommendedName>
    <alternativeName>
        <fullName evidence="4">Phomoidride biosynthesis cluster protein I</fullName>
    </alternativeName>
</protein>
<dbReference type="EC" id="4.2.1.-" evidence="2"/>
<dbReference type="EMBL" id="LC086931">
    <property type="protein sequence ID" value="BBG28506.1"/>
    <property type="molecule type" value="Genomic_DNA"/>
</dbReference>
<dbReference type="SMR" id="A0A348HAY4"/>
<dbReference type="GO" id="GO:0005739">
    <property type="term" value="C:mitochondrion"/>
    <property type="evidence" value="ECO:0007669"/>
    <property type="project" value="TreeGrafter"/>
</dbReference>
<dbReference type="GO" id="GO:0016829">
    <property type="term" value="F:lyase activity"/>
    <property type="evidence" value="ECO:0007669"/>
    <property type="project" value="UniProtKB-KW"/>
</dbReference>
<dbReference type="Gene3D" id="1.10.4100.10">
    <property type="entry name" value="2-methylcitrate dehydratase PrpD"/>
    <property type="match status" value="1"/>
</dbReference>
<dbReference type="Gene3D" id="3.30.1330.120">
    <property type="entry name" value="2-methylcitrate dehydratase PrpD"/>
    <property type="match status" value="1"/>
</dbReference>
<dbReference type="InterPro" id="IPR036148">
    <property type="entry name" value="MmgE/PrpD_sf"/>
</dbReference>
<dbReference type="InterPro" id="IPR042183">
    <property type="entry name" value="MmgE/PrpD_sf_1"/>
</dbReference>
<dbReference type="InterPro" id="IPR042188">
    <property type="entry name" value="MmgE/PrpD_sf_2"/>
</dbReference>
<dbReference type="InterPro" id="IPR005656">
    <property type="entry name" value="MmgE_PrpD"/>
</dbReference>
<dbReference type="InterPro" id="IPR045337">
    <property type="entry name" value="MmgE_PrpD_C"/>
</dbReference>
<dbReference type="InterPro" id="IPR045336">
    <property type="entry name" value="MmgE_PrpD_N"/>
</dbReference>
<dbReference type="PANTHER" id="PTHR16943">
    <property type="entry name" value="2-METHYLCITRATE DEHYDRATASE-RELATED"/>
    <property type="match status" value="1"/>
</dbReference>
<dbReference type="PANTHER" id="PTHR16943:SF15">
    <property type="entry name" value="DEHYDRATASE (PRPD), PUTATIVE-RELATED"/>
    <property type="match status" value="1"/>
</dbReference>
<dbReference type="Pfam" id="PF19305">
    <property type="entry name" value="MmgE_PrpD_C"/>
    <property type="match status" value="1"/>
</dbReference>
<dbReference type="Pfam" id="PF03972">
    <property type="entry name" value="MmgE_PrpD_N"/>
    <property type="match status" value="1"/>
</dbReference>
<dbReference type="SUPFAM" id="SSF103378">
    <property type="entry name" value="2-methylcitrate dehydratase PrpD"/>
    <property type="match status" value="1"/>
</dbReference>
<evidence type="ECO:0000250" key="1">
    <source>
        <dbReference type="UniProtKB" id="Q6C354"/>
    </source>
</evidence>
<evidence type="ECO:0000269" key="2">
    <source>
    </source>
</evidence>
<evidence type="ECO:0000269" key="3">
    <source>
    </source>
</evidence>
<evidence type="ECO:0000303" key="4">
    <source>
    </source>
</evidence>
<evidence type="ECO:0000305" key="5"/>
<evidence type="ECO:0000305" key="6">
    <source>
    </source>
</evidence>
<accession>A0A348HAY4</accession>
<comment type="function">
    <text evidence="2 6">Alkylcitrate dehydratase; part of the gene cluster that mediates the biosynthesis of the antihypercholesterolemic agents phomoidrides which are dimeric anhydrides (PubMed:26558485). Within the pathway, the alkylcitrate synthase (ACS) phiJ and the alkylcitrate dehydratase (ACDH) phiI produce the decarboxylated monomeric anhydrides by coupling the C12-fatty acyl product from phiA with oxalacetic acid (PubMed:26558485). The pathway begins with the highly reducing polyketide synthase phiA that catalyzes the formation of a C12-fatty acyl-ACP, starting from one acetate and 5 malonate units. The hydrolase phiM is involved in the release of the C12-fatty acyl chain from phiA. The alkylcitrate synthase (ACS) phiJ and the alkylcitrate dehydratase (ACDH) phiI then give rise to decarboxylated monomeric anhydrides by coupling the C12-fatty acyl chain with oxalacetic acid. The cyclase phiC is responsible for the dimerization of the monomeric anhydrides which leads to the production of prephomoidride that contains the characteristic bicyclo[4.3.1]deca-1,6-diene system of phomoidrides. Iterative oxidation catalyzed by the alpha-ketoglutarate-dependent dioxygenase phiK produced then phomoidride A. Finally, the methyltransferase phiE converts phomoidride A to phomoidride B via an acetalization reaction. The phosphatidylethanolamine-binding protein phiB and phiN are not essential for dimerization and their functions have still to be determined (Probable).</text>
</comment>
<comment type="catalytic activity">
    <reaction evidence="2">
        <text>(4E,11E)-2-hydroxytrideca-4,11-dien-1,2,3-tricarboxylate + 2 H(+) = [4-(deca-1,8-diyl)-2,5-dioxo-2,5-dihydro-3-furanyl]acetate + 2 H2O</text>
        <dbReference type="Rhea" id="RHEA:77755"/>
        <dbReference type="ChEBI" id="CHEBI:15377"/>
        <dbReference type="ChEBI" id="CHEBI:15378"/>
        <dbReference type="ChEBI" id="CHEBI:197420"/>
        <dbReference type="ChEBI" id="CHEBI:197445"/>
    </reaction>
    <physiologicalReaction direction="left-to-right" evidence="2">
        <dbReference type="Rhea" id="RHEA:77756"/>
    </physiologicalReaction>
</comment>
<comment type="pathway">
    <text evidence="2">Secondary metabolite biosynthesis.</text>
</comment>
<comment type="subunit">
    <text evidence="1">Monomer.</text>
</comment>
<comment type="induction">
    <text evidence="2">expression is induced under low pH conditions.</text>
</comment>
<comment type="biotechnology">
    <text evidence="3">Phomoidrides A and B (also known as CP-225,917 and CP-263,114) are potent inhibitors of Ras farnesyltransferase and squalene synthase (PubMed:9066758). CP-225,917 and CP-263,114 inhibit Ras farnesyl transferase from rat brain with IC(50) values of 6 uM and 20 uoM, respectively (PubMed:9066758). CP-225,917 inhibits squalene synthase with an IC(50) value of 43 uM and CP-263,114 with an IC(50) of 160 uM (PubMed:9066758).</text>
</comment>
<comment type="similarity">
    <text evidence="5">Belongs to the PrpD family.</text>
</comment>
<keyword id="KW-0456">Lyase</keyword>
<organism>
    <name type="scientific">Fungal sp. (strain ATCC 74256)</name>
    <dbReference type="NCBI Taxonomy" id="1729595"/>
    <lineage>
        <taxon>Eukaryota</taxon>
        <taxon>Fungi</taxon>
    </lineage>
</organism>
<sequence length="504" mass="55685">MQEAQVDVKVQSTKTLVMSSQYDKEIAAVAHYMHNYHINDRTTYQKARISLLDSLGCAIETVSKSAEVRSLLGPAVPGSKIPNGFRLPGTSYVLSPVEGAFDMGILIRYLDHNDALGGAEWGHPSDNLGAILSVMDWISRSSAAGIFTHNGPPMTMHTLLTATIKAYEIQGCYQLLNAFNIYGIDHVVLVKLASTAAVSWLLGLTEEQTMAAISHVWMDGQPTRVYRSGEDTIPRKGWAAGDACMRAVHIAFLVKHGQPGSPGALTNPRSGFYVKTFGDKGFQFARPFGEWAIRNVYLKTMPVEGHGISSVEAALIQRERLQERGLGLKDISGIDIRTTAAANLIINKTGRLHNAADRDHCIQYVIALAFIKGSPPEPEDYADDSPFATSQEIDALRDKTIIRPDEQLTRDYLDIEKKSAGAGMTIYLEDGTTMEEVLIEYPSGHMSNPKTKKLVEGKFERNMRLKFDDGEIMRIKDALNEDSMRVHEFLDLFVRKGQPGSPRL</sequence>
<name>PHII_FUNX7</name>